<name>SYP_ECOL6</name>
<organism>
    <name type="scientific">Escherichia coli O6:H1 (strain CFT073 / ATCC 700928 / UPEC)</name>
    <dbReference type="NCBI Taxonomy" id="199310"/>
    <lineage>
        <taxon>Bacteria</taxon>
        <taxon>Pseudomonadati</taxon>
        <taxon>Pseudomonadota</taxon>
        <taxon>Gammaproteobacteria</taxon>
        <taxon>Enterobacterales</taxon>
        <taxon>Enterobacteriaceae</taxon>
        <taxon>Escherichia</taxon>
    </lineage>
</organism>
<sequence length="572" mass="63603">MRTSQYLLSTLKETPADAEVISHQLMLRAGMIRKLASGLYTWLPTGVRVLKKVENIVREEMNNAGAIEVLMPVVQPSELWQESGRWEQYGPELLRIADRGDRPFVLGPTHEEVITDLIRNELSSYKQLPLNFYQIQTKFRDEVRPRFGVMRSREFLMKDAYSFHTSQESLQETYDAMYAAYSKIFSRMGLDFRAVQADTGSIGGSASHEFQVLAQSGEDDVVFSDTSDYAANIELAEAIAPKEPRAAATQEMTLVDTPNAKTIAELVEQFNLPIEKTVKTLLVKAVEGSSFPLVALLVRGDHELNEVKAEKLPQVASPLTFATEEEIRAVVKAGPGSLGPVNMPIPVVIDRTVAAMSDFAAGANIDGKHYFGINWDRDVATPEIADIRNVVAGDPSPDGQGTLLIKRGIEVGHIFQLGTKYSEALKASVQGEDGRNQILTMGCYGIGVTRVVAAAIEQNYDERGIVWPDAIAPFQVAILPMNMHKSFRVQELAEKLYSELRAQGIEVLLDDRKERPGVMFADMELIGIPHTIVLGDRNLDNDDIEYKYRRNGEKQLIKTGDIVDYLVKQIKG</sequence>
<gene>
    <name evidence="1" type="primary">proS</name>
    <name type="ordered locus">c0235</name>
</gene>
<dbReference type="EC" id="6.1.1.15" evidence="1"/>
<dbReference type="EMBL" id="AE014075">
    <property type="protein sequence ID" value="AAN78727.1"/>
    <property type="status" value="ALT_INIT"/>
    <property type="molecule type" value="Genomic_DNA"/>
</dbReference>
<dbReference type="RefSeq" id="WP_001260694.1">
    <property type="nucleotide sequence ID" value="NZ_CP051263.1"/>
</dbReference>
<dbReference type="SMR" id="Q8FKZ4"/>
<dbReference type="STRING" id="199310.c0235"/>
<dbReference type="KEGG" id="ecc:c0235"/>
<dbReference type="eggNOG" id="COG0442">
    <property type="taxonomic scope" value="Bacteria"/>
</dbReference>
<dbReference type="HOGENOM" id="CLU_016739_0_0_6"/>
<dbReference type="Proteomes" id="UP000001410">
    <property type="component" value="Chromosome"/>
</dbReference>
<dbReference type="GO" id="GO:0005829">
    <property type="term" value="C:cytosol"/>
    <property type="evidence" value="ECO:0007669"/>
    <property type="project" value="TreeGrafter"/>
</dbReference>
<dbReference type="GO" id="GO:0002161">
    <property type="term" value="F:aminoacyl-tRNA deacylase activity"/>
    <property type="evidence" value="ECO:0007669"/>
    <property type="project" value="InterPro"/>
</dbReference>
<dbReference type="GO" id="GO:0005524">
    <property type="term" value="F:ATP binding"/>
    <property type="evidence" value="ECO:0007669"/>
    <property type="project" value="UniProtKB-UniRule"/>
</dbReference>
<dbReference type="GO" id="GO:0004827">
    <property type="term" value="F:proline-tRNA ligase activity"/>
    <property type="evidence" value="ECO:0007669"/>
    <property type="project" value="UniProtKB-UniRule"/>
</dbReference>
<dbReference type="GO" id="GO:0006433">
    <property type="term" value="P:prolyl-tRNA aminoacylation"/>
    <property type="evidence" value="ECO:0007669"/>
    <property type="project" value="UniProtKB-UniRule"/>
</dbReference>
<dbReference type="CDD" id="cd04334">
    <property type="entry name" value="ProRS-INS"/>
    <property type="match status" value="1"/>
</dbReference>
<dbReference type="CDD" id="cd00861">
    <property type="entry name" value="ProRS_anticodon_short"/>
    <property type="match status" value="1"/>
</dbReference>
<dbReference type="CDD" id="cd00779">
    <property type="entry name" value="ProRS_core_prok"/>
    <property type="match status" value="1"/>
</dbReference>
<dbReference type="FunFam" id="3.30.930.10:FF:000043">
    <property type="entry name" value="Proline--tRNA ligase"/>
    <property type="match status" value="1"/>
</dbReference>
<dbReference type="FunFam" id="3.30.930.10:FF:000097">
    <property type="entry name" value="Proline--tRNA ligase"/>
    <property type="match status" value="1"/>
</dbReference>
<dbReference type="FunFam" id="3.40.50.800:FF:000006">
    <property type="entry name" value="Proline--tRNA ligase"/>
    <property type="match status" value="1"/>
</dbReference>
<dbReference type="FunFam" id="3.90.960.10:FF:000001">
    <property type="entry name" value="Proline--tRNA ligase"/>
    <property type="match status" value="1"/>
</dbReference>
<dbReference type="Gene3D" id="3.40.50.800">
    <property type="entry name" value="Anticodon-binding domain"/>
    <property type="match status" value="1"/>
</dbReference>
<dbReference type="Gene3D" id="3.30.930.10">
    <property type="entry name" value="Bira Bifunctional Protein, Domain 2"/>
    <property type="match status" value="2"/>
</dbReference>
<dbReference type="Gene3D" id="3.90.960.10">
    <property type="entry name" value="YbaK/aminoacyl-tRNA synthetase-associated domain"/>
    <property type="match status" value="1"/>
</dbReference>
<dbReference type="HAMAP" id="MF_01569">
    <property type="entry name" value="Pro_tRNA_synth_type1"/>
    <property type="match status" value="1"/>
</dbReference>
<dbReference type="InterPro" id="IPR002314">
    <property type="entry name" value="aa-tRNA-synt_IIb"/>
</dbReference>
<dbReference type="InterPro" id="IPR006195">
    <property type="entry name" value="aa-tRNA-synth_II"/>
</dbReference>
<dbReference type="InterPro" id="IPR045864">
    <property type="entry name" value="aa-tRNA-synth_II/BPL/LPL"/>
</dbReference>
<dbReference type="InterPro" id="IPR004154">
    <property type="entry name" value="Anticodon-bd"/>
</dbReference>
<dbReference type="InterPro" id="IPR036621">
    <property type="entry name" value="Anticodon-bd_dom_sf"/>
</dbReference>
<dbReference type="InterPro" id="IPR002316">
    <property type="entry name" value="Pro-tRNA-ligase_IIa"/>
</dbReference>
<dbReference type="InterPro" id="IPR004500">
    <property type="entry name" value="Pro-tRNA-synth_IIa_bac-type"/>
</dbReference>
<dbReference type="InterPro" id="IPR023717">
    <property type="entry name" value="Pro-tRNA-Synthase_IIa_type1"/>
</dbReference>
<dbReference type="InterPro" id="IPR050062">
    <property type="entry name" value="Pro-tRNA_synthetase"/>
</dbReference>
<dbReference type="InterPro" id="IPR044140">
    <property type="entry name" value="ProRS_anticodon_short"/>
</dbReference>
<dbReference type="InterPro" id="IPR033730">
    <property type="entry name" value="ProRS_core_prok"/>
</dbReference>
<dbReference type="InterPro" id="IPR036754">
    <property type="entry name" value="YbaK/aa-tRNA-synt-asso_dom_sf"/>
</dbReference>
<dbReference type="InterPro" id="IPR007214">
    <property type="entry name" value="YbaK/aa-tRNA-synth-assoc-dom"/>
</dbReference>
<dbReference type="NCBIfam" id="NF006625">
    <property type="entry name" value="PRK09194.1"/>
    <property type="match status" value="1"/>
</dbReference>
<dbReference type="NCBIfam" id="TIGR00409">
    <property type="entry name" value="proS_fam_II"/>
    <property type="match status" value="1"/>
</dbReference>
<dbReference type="PANTHER" id="PTHR42753">
    <property type="entry name" value="MITOCHONDRIAL RIBOSOME PROTEIN L39/PROLYL-TRNA LIGASE FAMILY MEMBER"/>
    <property type="match status" value="1"/>
</dbReference>
<dbReference type="PANTHER" id="PTHR42753:SF2">
    <property type="entry name" value="PROLINE--TRNA LIGASE"/>
    <property type="match status" value="1"/>
</dbReference>
<dbReference type="Pfam" id="PF03129">
    <property type="entry name" value="HGTP_anticodon"/>
    <property type="match status" value="1"/>
</dbReference>
<dbReference type="Pfam" id="PF00587">
    <property type="entry name" value="tRNA-synt_2b"/>
    <property type="match status" value="1"/>
</dbReference>
<dbReference type="Pfam" id="PF04073">
    <property type="entry name" value="tRNA_edit"/>
    <property type="match status" value="1"/>
</dbReference>
<dbReference type="PIRSF" id="PIRSF001535">
    <property type="entry name" value="ProRS_1"/>
    <property type="match status" value="1"/>
</dbReference>
<dbReference type="PRINTS" id="PR01046">
    <property type="entry name" value="TRNASYNTHPRO"/>
</dbReference>
<dbReference type="SUPFAM" id="SSF52954">
    <property type="entry name" value="Class II aaRS ABD-related"/>
    <property type="match status" value="1"/>
</dbReference>
<dbReference type="SUPFAM" id="SSF55681">
    <property type="entry name" value="Class II aaRS and biotin synthetases"/>
    <property type="match status" value="1"/>
</dbReference>
<dbReference type="SUPFAM" id="SSF55826">
    <property type="entry name" value="YbaK/ProRS associated domain"/>
    <property type="match status" value="1"/>
</dbReference>
<dbReference type="PROSITE" id="PS50862">
    <property type="entry name" value="AA_TRNA_LIGASE_II"/>
    <property type="match status" value="1"/>
</dbReference>
<reference key="1">
    <citation type="journal article" date="2002" name="Proc. Natl. Acad. Sci. U.S.A.">
        <title>Extensive mosaic structure revealed by the complete genome sequence of uropathogenic Escherichia coli.</title>
        <authorList>
            <person name="Welch R.A."/>
            <person name="Burland V."/>
            <person name="Plunkett G. III"/>
            <person name="Redford P."/>
            <person name="Roesch P."/>
            <person name="Rasko D."/>
            <person name="Buckles E.L."/>
            <person name="Liou S.-R."/>
            <person name="Boutin A."/>
            <person name="Hackett J."/>
            <person name="Stroud D."/>
            <person name="Mayhew G.F."/>
            <person name="Rose D.J."/>
            <person name="Zhou S."/>
            <person name="Schwartz D.C."/>
            <person name="Perna N.T."/>
            <person name="Mobley H.L.T."/>
            <person name="Donnenberg M.S."/>
            <person name="Blattner F.R."/>
        </authorList>
    </citation>
    <scope>NUCLEOTIDE SEQUENCE [LARGE SCALE GENOMIC DNA]</scope>
    <source>
        <strain>CFT073 / ATCC 700928 / UPEC</strain>
    </source>
</reference>
<evidence type="ECO:0000255" key="1">
    <source>
        <dbReference type="HAMAP-Rule" id="MF_01569"/>
    </source>
</evidence>
<evidence type="ECO:0000305" key="2"/>
<comment type="function">
    <text evidence="1">Catalyzes the attachment of proline to tRNA(Pro) in a two-step reaction: proline is first activated by ATP to form Pro-AMP and then transferred to the acceptor end of tRNA(Pro). As ProRS can inadvertently accommodate and process non-cognate amino acids such as alanine and cysteine, to avoid such errors it has two additional distinct editing activities against alanine. One activity is designated as 'pretransfer' editing and involves the tRNA(Pro)-independent hydrolysis of activated Ala-AMP. The other activity is designated 'posttransfer' editing and involves deacylation of mischarged Ala-tRNA(Pro). The misacylated Cys-tRNA(Pro) is not edited by ProRS.</text>
</comment>
<comment type="catalytic activity">
    <reaction evidence="1">
        <text>tRNA(Pro) + L-proline + ATP = L-prolyl-tRNA(Pro) + AMP + diphosphate</text>
        <dbReference type="Rhea" id="RHEA:14305"/>
        <dbReference type="Rhea" id="RHEA-COMP:9700"/>
        <dbReference type="Rhea" id="RHEA-COMP:9702"/>
        <dbReference type="ChEBI" id="CHEBI:30616"/>
        <dbReference type="ChEBI" id="CHEBI:33019"/>
        <dbReference type="ChEBI" id="CHEBI:60039"/>
        <dbReference type="ChEBI" id="CHEBI:78442"/>
        <dbReference type="ChEBI" id="CHEBI:78532"/>
        <dbReference type="ChEBI" id="CHEBI:456215"/>
        <dbReference type="EC" id="6.1.1.15"/>
    </reaction>
</comment>
<comment type="subunit">
    <text evidence="1">Homodimer.</text>
</comment>
<comment type="subcellular location">
    <subcellularLocation>
        <location evidence="1">Cytoplasm</location>
    </subcellularLocation>
</comment>
<comment type="domain">
    <text evidence="1">Consists of three domains: the N-terminal catalytic domain, the editing domain and the C-terminal anticodon-binding domain.</text>
</comment>
<comment type="similarity">
    <text evidence="1">Belongs to the class-II aminoacyl-tRNA synthetase family. ProS type 1 subfamily.</text>
</comment>
<comment type="sequence caution" evidence="2">
    <conflict type="erroneous initiation">
        <sequence resource="EMBL-CDS" id="AAN78727"/>
    </conflict>
</comment>
<feature type="chain" id="PRO_0000248692" description="Proline--tRNA ligase">
    <location>
        <begin position="1"/>
        <end position="572"/>
    </location>
</feature>
<proteinExistence type="inferred from homology"/>
<keyword id="KW-0030">Aminoacyl-tRNA synthetase</keyword>
<keyword id="KW-0067">ATP-binding</keyword>
<keyword id="KW-0963">Cytoplasm</keyword>
<keyword id="KW-0436">Ligase</keyword>
<keyword id="KW-0547">Nucleotide-binding</keyword>
<keyword id="KW-0648">Protein biosynthesis</keyword>
<keyword id="KW-1185">Reference proteome</keyword>
<protein>
    <recommendedName>
        <fullName evidence="1">Proline--tRNA ligase</fullName>
        <ecNumber evidence="1">6.1.1.15</ecNumber>
    </recommendedName>
    <alternativeName>
        <fullName evidence="1">Prolyl-tRNA synthetase</fullName>
        <shortName evidence="1">ProRS</shortName>
    </alternativeName>
</protein>
<accession>Q8FKZ4</accession>